<feature type="chain" id="PRO_1000048554" description="DNA replication and repair protein RecF">
    <location>
        <begin position="1"/>
        <end position="363"/>
    </location>
</feature>
<feature type="binding site" evidence="1">
    <location>
        <begin position="30"/>
        <end position="37"/>
    </location>
    <ligand>
        <name>ATP</name>
        <dbReference type="ChEBI" id="CHEBI:30616"/>
    </ligand>
</feature>
<accession>Q15ZZ5</accession>
<protein>
    <recommendedName>
        <fullName evidence="1">DNA replication and repair protein RecF</fullName>
    </recommendedName>
</protein>
<keyword id="KW-0067">ATP-binding</keyword>
<keyword id="KW-0963">Cytoplasm</keyword>
<keyword id="KW-0227">DNA damage</keyword>
<keyword id="KW-0234">DNA repair</keyword>
<keyword id="KW-0235">DNA replication</keyword>
<keyword id="KW-0238">DNA-binding</keyword>
<keyword id="KW-0547">Nucleotide-binding</keyword>
<keyword id="KW-0742">SOS response</keyword>
<name>RECF_PSEA6</name>
<sequence length="363" mass="41380">MKLDSVQIRNLRNLQHVTFKPSHGVNFILGINGSGKSSILEAIHYLGFGRSFRTSKHKNVIQNEQESFTVFCECLEDSTTQRLGLSRSINDTVSVSINGIKGNKVSDLVSLLPVQIFTPQSSDILLGAPKLRRKYIDWCLFHVEHSFLTCSNAYSRLLKHNNALCRKQQVGYANPQRVYWTDLLAQYGSELTEFRNAMMTRLIPLITSNLAQFLPEFCVEISYYRGWEKGLELNEALTKSADRDYKNGYISVGPHKADVRFKISGKPAQEVLSRGQLRMLVAALQLATTQCLMSYTQKTCIFLLDDVGAELDAAKREVFIDRLLESNTQLFVTAIEEHQLEFIDKYQNKKMFHVEHGQVREES</sequence>
<comment type="function">
    <text evidence="1">The RecF protein is involved in DNA metabolism; it is required for DNA replication and normal SOS inducibility. RecF binds preferentially to single-stranded, linear DNA. It also seems to bind ATP.</text>
</comment>
<comment type="subcellular location">
    <subcellularLocation>
        <location evidence="1">Cytoplasm</location>
    </subcellularLocation>
</comment>
<comment type="similarity">
    <text evidence="1">Belongs to the RecF family.</text>
</comment>
<proteinExistence type="inferred from homology"/>
<gene>
    <name evidence="1" type="primary">recF</name>
    <name type="ordered locus">Patl_0003</name>
</gene>
<organism>
    <name type="scientific">Pseudoalteromonas atlantica (strain T6c / ATCC BAA-1087)</name>
    <dbReference type="NCBI Taxonomy" id="3042615"/>
    <lineage>
        <taxon>Bacteria</taxon>
        <taxon>Pseudomonadati</taxon>
        <taxon>Pseudomonadota</taxon>
        <taxon>Gammaproteobacteria</taxon>
        <taxon>Alteromonadales</taxon>
        <taxon>Alteromonadaceae</taxon>
        <taxon>Paraglaciecola</taxon>
    </lineage>
</organism>
<dbReference type="EMBL" id="CP000388">
    <property type="protein sequence ID" value="ABG38536.1"/>
    <property type="molecule type" value="Genomic_DNA"/>
</dbReference>
<dbReference type="RefSeq" id="WP_011572955.1">
    <property type="nucleotide sequence ID" value="NC_008228.1"/>
</dbReference>
<dbReference type="SMR" id="Q15ZZ5"/>
<dbReference type="STRING" id="342610.Patl_0003"/>
<dbReference type="KEGG" id="pat:Patl_0003"/>
<dbReference type="eggNOG" id="COG1195">
    <property type="taxonomic scope" value="Bacteria"/>
</dbReference>
<dbReference type="HOGENOM" id="CLU_040267_0_0_6"/>
<dbReference type="OrthoDB" id="9803889at2"/>
<dbReference type="Proteomes" id="UP000001981">
    <property type="component" value="Chromosome"/>
</dbReference>
<dbReference type="GO" id="GO:0005737">
    <property type="term" value="C:cytoplasm"/>
    <property type="evidence" value="ECO:0007669"/>
    <property type="project" value="UniProtKB-SubCell"/>
</dbReference>
<dbReference type="GO" id="GO:0005524">
    <property type="term" value="F:ATP binding"/>
    <property type="evidence" value="ECO:0007669"/>
    <property type="project" value="UniProtKB-UniRule"/>
</dbReference>
<dbReference type="GO" id="GO:0003697">
    <property type="term" value="F:single-stranded DNA binding"/>
    <property type="evidence" value="ECO:0007669"/>
    <property type="project" value="UniProtKB-UniRule"/>
</dbReference>
<dbReference type="GO" id="GO:0006260">
    <property type="term" value="P:DNA replication"/>
    <property type="evidence" value="ECO:0007669"/>
    <property type="project" value="UniProtKB-UniRule"/>
</dbReference>
<dbReference type="GO" id="GO:0000731">
    <property type="term" value="P:DNA synthesis involved in DNA repair"/>
    <property type="evidence" value="ECO:0007669"/>
    <property type="project" value="TreeGrafter"/>
</dbReference>
<dbReference type="GO" id="GO:0006302">
    <property type="term" value="P:double-strand break repair"/>
    <property type="evidence" value="ECO:0007669"/>
    <property type="project" value="TreeGrafter"/>
</dbReference>
<dbReference type="GO" id="GO:0009432">
    <property type="term" value="P:SOS response"/>
    <property type="evidence" value="ECO:0007669"/>
    <property type="project" value="UniProtKB-UniRule"/>
</dbReference>
<dbReference type="Gene3D" id="3.40.50.300">
    <property type="entry name" value="P-loop containing nucleotide triphosphate hydrolases"/>
    <property type="match status" value="1"/>
</dbReference>
<dbReference type="Gene3D" id="1.20.1050.90">
    <property type="entry name" value="RecF/RecN/SMC, N-terminal domain"/>
    <property type="match status" value="1"/>
</dbReference>
<dbReference type="HAMAP" id="MF_00365">
    <property type="entry name" value="RecF"/>
    <property type="match status" value="1"/>
</dbReference>
<dbReference type="InterPro" id="IPR001238">
    <property type="entry name" value="DNA-binding_RecF"/>
</dbReference>
<dbReference type="InterPro" id="IPR018078">
    <property type="entry name" value="DNA-binding_RecF_CS"/>
</dbReference>
<dbReference type="InterPro" id="IPR027417">
    <property type="entry name" value="P-loop_NTPase"/>
</dbReference>
<dbReference type="InterPro" id="IPR003395">
    <property type="entry name" value="RecF/RecN/SMC_N"/>
</dbReference>
<dbReference type="InterPro" id="IPR042174">
    <property type="entry name" value="RecF_2"/>
</dbReference>
<dbReference type="NCBIfam" id="TIGR00611">
    <property type="entry name" value="recf"/>
    <property type="match status" value="1"/>
</dbReference>
<dbReference type="PANTHER" id="PTHR32182">
    <property type="entry name" value="DNA REPLICATION AND REPAIR PROTEIN RECF"/>
    <property type="match status" value="1"/>
</dbReference>
<dbReference type="PANTHER" id="PTHR32182:SF0">
    <property type="entry name" value="DNA REPLICATION AND REPAIR PROTEIN RECF"/>
    <property type="match status" value="1"/>
</dbReference>
<dbReference type="Pfam" id="PF02463">
    <property type="entry name" value="SMC_N"/>
    <property type="match status" value="1"/>
</dbReference>
<dbReference type="SUPFAM" id="SSF52540">
    <property type="entry name" value="P-loop containing nucleoside triphosphate hydrolases"/>
    <property type="match status" value="1"/>
</dbReference>
<dbReference type="PROSITE" id="PS00617">
    <property type="entry name" value="RECF_1"/>
    <property type="match status" value="1"/>
</dbReference>
<dbReference type="PROSITE" id="PS00618">
    <property type="entry name" value="RECF_2"/>
    <property type="match status" value="1"/>
</dbReference>
<reference key="1">
    <citation type="submission" date="2006-06" db="EMBL/GenBank/DDBJ databases">
        <title>Complete sequence of Pseudoalteromonas atlantica T6c.</title>
        <authorList>
            <consortium name="US DOE Joint Genome Institute"/>
            <person name="Copeland A."/>
            <person name="Lucas S."/>
            <person name="Lapidus A."/>
            <person name="Barry K."/>
            <person name="Detter J.C."/>
            <person name="Glavina del Rio T."/>
            <person name="Hammon N."/>
            <person name="Israni S."/>
            <person name="Dalin E."/>
            <person name="Tice H."/>
            <person name="Pitluck S."/>
            <person name="Saunders E."/>
            <person name="Brettin T."/>
            <person name="Bruce D."/>
            <person name="Han C."/>
            <person name="Tapia R."/>
            <person name="Gilna P."/>
            <person name="Schmutz J."/>
            <person name="Larimer F."/>
            <person name="Land M."/>
            <person name="Hauser L."/>
            <person name="Kyrpides N."/>
            <person name="Kim E."/>
            <person name="Karls A.C."/>
            <person name="Bartlett D."/>
            <person name="Higgins B.P."/>
            <person name="Richardson P."/>
        </authorList>
    </citation>
    <scope>NUCLEOTIDE SEQUENCE [LARGE SCALE GENOMIC DNA]</scope>
    <source>
        <strain>T6c / ATCC BAA-1087</strain>
    </source>
</reference>
<evidence type="ECO:0000255" key="1">
    <source>
        <dbReference type="HAMAP-Rule" id="MF_00365"/>
    </source>
</evidence>